<evidence type="ECO:0000255" key="1">
    <source>
        <dbReference type="HAMAP-Rule" id="MF_02017"/>
    </source>
</evidence>
<evidence type="ECO:0000256" key="2">
    <source>
        <dbReference type="SAM" id="MobiDB-lite"/>
    </source>
</evidence>
<accession>Q0TEW9</accession>
<organism>
    <name type="scientific">Escherichia coli O6:K15:H31 (strain 536 / UPEC)</name>
    <dbReference type="NCBI Taxonomy" id="362663"/>
    <lineage>
        <taxon>Bacteria</taxon>
        <taxon>Pseudomonadati</taxon>
        <taxon>Pseudomonadota</taxon>
        <taxon>Gammaproteobacteria</taxon>
        <taxon>Enterobacterales</taxon>
        <taxon>Enterobacteriaceae</taxon>
        <taxon>Escherichia</taxon>
    </lineage>
</organism>
<sequence>MNTEATHDQNEALTTGARLRNAREQLGLSQQAVAERLCLKVSTVRDIEEDKAPADLASTFLRGYIRSYARLVHIPEEELQPGLEKQAPLRAAKVAPMQSFSLGKRRKKRDGWLMTFTWLVLFVVIGLSGAWWWQDHKAQQEEITTMADQSSAELNNNQSQSVPLDTSTTTDQAMATTPTSPVDTTATNTQTPAVTAPAPAVDPQQNAVVPPSQANVDTAATPAPAATTTPDGAAPLPTDQAGVTTPAVDPNALVMNFTADCWLEVTDATGKKLFSGMQRKDGNLNLTGQAPYKLKIGAPAAVQIQYQGKPVDLSRFIRTNQVARLTLNAEQSPAQ</sequence>
<comment type="function">
    <text evidence="1">Cytoskeletal protein that is involved in cell-shape control through regulation of the length of the long axis.</text>
</comment>
<comment type="subcellular location">
    <subcellularLocation>
        <location evidence="1">Cell inner membrane</location>
        <topology evidence="1">Single-pass type II membrane protein</topology>
    </subcellularLocation>
    <text evidence="1">Forms helical filaments along the long axis of the cell.</text>
</comment>
<comment type="domain">
    <text evidence="1">The helix-turn-helix (HTH) motif in the cytoplasmic domain of the N-terminus is involved in the formation of spirals to maintain the rigid rod shape. As this protein is anchored in the cytoplasmic membrane, the HTH motif may contribute to protein-protein interactions to form the RodZ helix, which is localized beneath the cytoplasmic membrane. The C-terminal domain may be critical for determination of the rod shape by probably interacting with enzymes required for synthesis of the peptidoglycan layer, including PBPs in the periplasm.</text>
</comment>
<comment type="similarity">
    <text evidence="1">Belongs to the RodZ family.</text>
</comment>
<proteinExistence type="inferred from homology"/>
<keyword id="KW-0997">Cell inner membrane</keyword>
<keyword id="KW-1003">Cell membrane</keyword>
<keyword id="KW-0133">Cell shape</keyword>
<keyword id="KW-0238">DNA-binding</keyword>
<keyword id="KW-0472">Membrane</keyword>
<keyword id="KW-0735">Signal-anchor</keyword>
<keyword id="KW-0812">Transmembrane</keyword>
<keyword id="KW-1133">Transmembrane helix</keyword>
<feature type="chain" id="PRO_0000361843" description="Cytoskeleton protein RodZ">
    <location>
        <begin position="1"/>
        <end position="335"/>
    </location>
</feature>
<feature type="topological domain" description="Cytoplasmic" evidence="1">
    <location>
        <begin position="1"/>
        <end position="111"/>
    </location>
</feature>
<feature type="transmembrane region" description="Helical; Signal-anchor for type II membrane protein" evidence="1">
    <location>
        <begin position="112"/>
        <end position="132"/>
    </location>
</feature>
<feature type="topological domain" description="Periplasmic" evidence="1">
    <location>
        <begin position="133"/>
        <end position="335"/>
    </location>
</feature>
<feature type="domain" description="HTH cro/C1-type" evidence="1">
    <location>
        <begin position="19"/>
        <end position="71"/>
    </location>
</feature>
<feature type="DNA-binding region" description="H-T-H motif" evidence="1">
    <location>
        <begin position="30"/>
        <end position="49"/>
    </location>
</feature>
<feature type="region of interest" description="Disordered" evidence="2">
    <location>
        <begin position="148"/>
        <end position="239"/>
    </location>
</feature>
<feature type="compositionally biased region" description="Polar residues" evidence="2">
    <location>
        <begin position="148"/>
        <end position="164"/>
    </location>
</feature>
<feature type="compositionally biased region" description="Low complexity" evidence="2">
    <location>
        <begin position="165"/>
        <end position="205"/>
    </location>
</feature>
<feature type="compositionally biased region" description="Low complexity" evidence="2">
    <location>
        <begin position="217"/>
        <end position="239"/>
    </location>
</feature>
<gene>
    <name evidence="1" type="primary">rodZ</name>
    <name type="ordered locus">ECP_2521</name>
</gene>
<dbReference type="EMBL" id="CP000247">
    <property type="protein sequence ID" value="ABG70510.1"/>
    <property type="molecule type" value="Genomic_DNA"/>
</dbReference>
<dbReference type="RefSeq" id="WP_001090872.1">
    <property type="nucleotide sequence ID" value="NC_008253.1"/>
</dbReference>
<dbReference type="SMR" id="Q0TEW9"/>
<dbReference type="KEGG" id="ecp:ECP_2521"/>
<dbReference type="HOGENOM" id="CLU_047530_3_1_6"/>
<dbReference type="Proteomes" id="UP000009182">
    <property type="component" value="Chromosome"/>
</dbReference>
<dbReference type="GO" id="GO:0005886">
    <property type="term" value="C:plasma membrane"/>
    <property type="evidence" value="ECO:0007669"/>
    <property type="project" value="UniProtKB-SubCell"/>
</dbReference>
<dbReference type="GO" id="GO:0003677">
    <property type="term" value="F:DNA binding"/>
    <property type="evidence" value="ECO:0007669"/>
    <property type="project" value="UniProtKB-KW"/>
</dbReference>
<dbReference type="GO" id="GO:0008360">
    <property type="term" value="P:regulation of cell shape"/>
    <property type="evidence" value="ECO:0007669"/>
    <property type="project" value="UniProtKB-UniRule"/>
</dbReference>
<dbReference type="CDD" id="cd00093">
    <property type="entry name" value="HTH_XRE"/>
    <property type="match status" value="1"/>
</dbReference>
<dbReference type="FunFam" id="1.10.260.40:FF:000014">
    <property type="entry name" value="Cytoskeleton protein RodZ"/>
    <property type="match status" value="1"/>
</dbReference>
<dbReference type="Gene3D" id="1.10.260.40">
    <property type="entry name" value="lambda repressor-like DNA-binding domains"/>
    <property type="match status" value="1"/>
</dbReference>
<dbReference type="HAMAP" id="MF_02017">
    <property type="entry name" value="RodZ"/>
    <property type="match status" value="1"/>
</dbReference>
<dbReference type="InterPro" id="IPR050400">
    <property type="entry name" value="Bact_Cytoskel_RodZ"/>
</dbReference>
<dbReference type="InterPro" id="IPR001387">
    <property type="entry name" value="Cro/C1-type_HTH"/>
</dbReference>
<dbReference type="InterPro" id="IPR010982">
    <property type="entry name" value="Lambda_DNA-bd_dom_sf"/>
</dbReference>
<dbReference type="InterPro" id="IPR023690">
    <property type="entry name" value="RodZ"/>
</dbReference>
<dbReference type="InterPro" id="IPR025194">
    <property type="entry name" value="RodZ-like_C"/>
</dbReference>
<dbReference type="NCBIfam" id="NF008109">
    <property type="entry name" value="PRK10856.1"/>
    <property type="match status" value="1"/>
</dbReference>
<dbReference type="PANTHER" id="PTHR34475">
    <property type="match status" value="1"/>
</dbReference>
<dbReference type="PANTHER" id="PTHR34475:SF1">
    <property type="entry name" value="CYTOSKELETON PROTEIN RODZ"/>
    <property type="match status" value="1"/>
</dbReference>
<dbReference type="Pfam" id="PF13413">
    <property type="entry name" value="HTH_25"/>
    <property type="match status" value="1"/>
</dbReference>
<dbReference type="Pfam" id="PF13464">
    <property type="entry name" value="RodZ_C"/>
    <property type="match status" value="1"/>
</dbReference>
<dbReference type="SMART" id="SM00530">
    <property type="entry name" value="HTH_XRE"/>
    <property type="match status" value="1"/>
</dbReference>
<dbReference type="SUPFAM" id="SSF47413">
    <property type="entry name" value="lambda repressor-like DNA-binding domains"/>
    <property type="match status" value="1"/>
</dbReference>
<dbReference type="PROSITE" id="PS50943">
    <property type="entry name" value="HTH_CROC1"/>
    <property type="match status" value="1"/>
</dbReference>
<reference key="1">
    <citation type="journal article" date="2006" name="Mol. Microbiol.">
        <title>Role of pathogenicity island-associated integrases in the genome plasticity of uropathogenic Escherichia coli strain 536.</title>
        <authorList>
            <person name="Hochhut B."/>
            <person name="Wilde C."/>
            <person name="Balling G."/>
            <person name="Middendorf B."/>
            <person name="Dobrindt U."/>
            <person name="Brzuszkiewicz E."/>
            <person name="Gottschalk G."/>
            <person name="Carniel E."/>
            <person name="Hacker J."/>
        </authorList>
    </citation>
    <scope>NUCLEOTIDE SEQUENCE [LARGE SCALE GENOMIC DNA]</scope>
    <source>
        <strain>536 / UPEC</strain>
    </source>
</reference>
<name>RODZ_ECOL5</name>
<protein>
    <recommendedName>
        <fullName evidence="1">Cytoskeleton protein RodZ</fullName>
    </recommendedName>
</protein>